<comment type="function">
    <text evidence="2">Seems to be required for the assembly of the photosystem I complex.</text>
</comment>
<comment type="subcellular location">
    <subcellularLocation>
        <location evidence="1">Plastid</location>
        <location evidence="1">Cyanelle thylakoid membrane</location>
        <topology evidence="2">Multi-pass membrane protein</topology>
    </subcellularLocation>
</comment>
<comment type="similarity">
    <text evidence="2">Belongs to the Ycf4 family.</text>
</comment>
<reference key="1">
    <citation type="journal article" date="1995" name="Plant Mol. Biol. Rep.">
        <title>Nucleotide sequence of the cyanelle DNA from Cyanophora paradoxa.</title>
        <authorList>
            <person name="Stirewalt V.L."/>
            <person name="Michalowski C.B."/>
            <person name="Loeffelhardt W."/>
            <person name="Bohnert H.J."/>
            <person name="Bryant D.A."/>
        </authorList>
    </citation>
    <scope>NUCLEOTIDE SEQUENCE [LARGE SCALE GENOMIC DNA]</scope>
    <source>
        <strain>UTEX LB 555 / Pringsheim</strain>
    </source>
</reference>
<reference key="2">
    <citation type="book" date="1997" name="Eukaryotism and symbiosis">
        <title>The complete sequence of the cyanelle genome of Cyanophora paradoxa: the genetic complexity of a primitive plastid.</title>
        <editorList>
            <person name="Schenk H.E.A."/>
            <person name="Herrmann R."/>
            <person name="Jeon K.W."/>
            <person name="Mueller N.E."/>
            <person name="Schwemmler W."/>
        </editorList>
        <authorList>
            <person name="Loeffelhardt W."/>
            <person name="Stirewalt V.L."/>
            <person name="Michalowski C.B."/>
            <person name="Annarella M."/>
            <person name="Farley J.Y."/>
            <person name="Schluchter W.M."/>
            <person name="Chung S."/>
            <person name="Newmann-Spallart C."/>
            <person name="Steiner J.M."/>
            <person name="Jakowitsch J."/>
            <person name="Bohnert H.J."/>
            <person name="Bryant D.A."/>
        </authorList>
    </citation>
    <scope>NUCLEOTIDE SEQUENCE [LARGE SCALE GENOMIC DNA]</scope>
    <source>
        <strain>UTEX LB 555 / Pringsheim</strain>
    </source>
</reference>
<name>YCF4_CYAPA</name>
<geneLocation type="cyanelle"/>
<sequence length="187" mass="21207">MNLKNNTDQIKRDLITGSRRLSNYWWAITIGLGSSGFILAGISSYTKINLLPFTDTTQFLFIPQGITMLLYGTIGFLLDIYLWLLILWNVGAGYNEYNKKKGTVSIFRWGFPGTNRRIEVIYPIEQIQAIKLEIKQGLNPRHSISLKIQEKNEIVITPIGYLLPISVVEEQAANLASFLNIPLDSNQ</sequence>
<accession>P48192</accession>
<protein>
    <recommendedName>
        <fullName evidence="2">Photosystem I assembly protein Ycf4</fullName>
    </recommendedName>
</protein>
<dbReference type="EMBL" id="U30821">
    <property type="protein sequence ID" value="AAA81178.1"/>
    <property type="molecule type" value="Genomic_DNA"/>
</dbReference>
<dbReference type="PIR" id="T06835">
    <property type="entry name" value="T06835"/>
</dbReference>
<dbReference type="RefSeq" id="NP_043147.1">
    <property type="nucleotide sequence ID" value="NC_001675.1"/>
</dbReference>
<dbReference type="GeneID" id="801662"/>
<dbReference type="GO" id="GO:0033115">
    <property type="term" value="C:cyanelle thylakoid membrane"/>
    <property type="evidence" value="ECO:0007669"/>
    <property type="project" value="UniProtKB-SubCell"/>
</dbReference>
<dbReference type="GO" id="GO:0009522">
    <property type="term" value="C:photosystem I"/>
    <property type="evidence" value="ECO:0007669"/>
    <property type="project" value="InterPro"/>
</dbReference>
<dbReference type="GO" id="GO:0015979">
    <property type="term" value="P:photosynthesis"/>
    <property type="evidence" value="ECO:0007669"/>
    <property type="project" value="UniProtKB-UniRule"/>
</dbReference>
<dbReference type="HAMAP" id="MF_00437">
    <property type="entry name" value="Ycf4"/>
    <property type="match status" value="1"/>
</dbReference>
<dbReference type="InterPro" id="IPR003359">
    <property type="entry name" value="PSI_Ycf4_assembly"/>
</dbReference>
<dbReference type="NCBIfam" id="NF002712">
    <property type="entry name" value="PRK02542.1"/>
    <property type="match status" value="1"/>
</dbReference>
<dbReference type="Pfam" id="PF02392">
    <property type="entry name" value="Ycf4"/>
    <property type="match status" value="1"/>
</dbReference>
<proteinExistence type="inferred from homology"/>
<gene>
    <name evidence="2" type="primary">ycf4</name>
</gene>
<organism>
    <name type="scientific">Cyanophora paradoxa</name>
    <dbReference type="NCBI Taxonomy" id="2762"/>
    <lineage>
        <taxon>Eukaryota</taxon>
        <taxon>Glaucocystophyceae</taxon>
        <taxon>Cyanophoraceae</taxon>
        <taxon>Cyanophora</taxon>
    </lineage>
</organism>
<feature type="chain" id="PRO_0000217604" description="Photosystem I assembly protein Ycf4">
    <location>
        <begin position="1"/>
        <end position="187"/>
    </location>
</feature>
<feature type="transmembrane region" description="Helical" evidence="2">
    <location>
        <begin position="21"/>
        <end position="43"/>
    </location>
</feature>
<feature type="transmembrane region" description="Helical" evidence="2">
    <location>
        <begin position="69"/>
        <end position="91"/>
    </location>
</feature>
<evidence type="ECO:0000250" key="1"/>
<evidence type="ECO:0000255" key="2">
    <source>
        <dbReference type="HAMAP-Rule" id="MF_00437"/>
    </source>
</evidence>
<keyword id="KW-0194">Cyanelle</keyword>
<keyword id="KW-0472">Membrane</keyword>
<keyword id="KW-0602">Photosynthesis</keyword>
<keyword id="KW-0934">Plastid</keyword>
<keyword id="KW-0793">Thylakoid</keyword>
<keyword id="KW-0812">Transmembrane</keyword>
<keyword id="KW-1133">Transmembrane helix</keyword>